<proteinExistence type="inferred from homology"/>
<name>UVRC_STAA8</name>
<sequence>MEDYKQRIKNKLNVVPMEPGCYLMKDRNDQVIYVGKAKKLRNRLRSYFTGAHDAKTTRLVGEIRRFEFIVTSSETESLLLELNLIKQYQPRYNILLKDDKSYPFIKITKEKYPRLLVTRTVKQGTGKYFGPYPNAYSAQETKKLLDRIYPYRKCDKMPDKLCLYYHIGQCLGPCVYDVDLSKYAQMTKEITDFLNGEDKTILKSLEERMLTASESLDFERAKEYRDLIQHIQNLTNKQKIMSSDKTIRDVFGYSVDKGWMCIQVFFIRQGNMIKRDTTMIPLQQTEEEEFYTFIGQFYSLNQHILPKEVHVPRNLDKEMIQSVVDTKIVQPARGPKKDMVDLAAHNAKVSLNNKFELISRDESRTIKAIEELGTQMGIQTPIRIEAFDNSNIQGVDPVSAMVTFVDGKPDKKNYRKYKIKTVKGPDDYKSMREVVRRRYSRVLNEGLPLPDLIIVDGGKGHMNGVIDVLQNELGLDIPVAGLQKNDKHQTSELLYGASAEIVPLKKNSQAFYLLHRIQDEVHRFAITFHRQTRQKTGLKSILDDIDGIGNKRKTLLLRSFGSIKKMKEATLEDFKNIGIPENVAKNLHEQLHK</sequence>
<evidence type="ECO:0000255" key="1">
    <source>
        <dbReference type="HAMAP-Rule" id="MF_00203"/>
    </source>
</evidence>
<evidence type="ECO:0000305" key="2"/>
<comment type="function">
    <text evidence="1">The UvrABC repair system catalyzes the recognition and processing of DNA lesions. UvrC both incises the 5' and 3' sides of the lesion. The N-terminal half is responsible for the 3' incision and the C-terminal half is responsible for the 5' incision.</text>
</comment>
<comment type="subunit">
    <text evidence="1">Interacts with UvrB in an incision complex.</text>
</comment>
<comment type="subcellular location">
    <subcellularLocation>
        <location evidence="1">Cytoplasm</location>
    </subcellularLocation>
</comment>
<comment type="similarity">
    <text evidence="1">Belongs to the UvrC family.</text>
</comment>
<comment type="sequence caution" evidence="2">
    <conflict type="erroneous initiation">
        <sequence resource="EMBL-CDS" id="ABD30216"/>
    </conflict>
</comment>
<organism>
    <name type="scientific">Staphylococcus aureus (strain NCTC 8325 / PS 47)</name>
    <dbReference type="NCBI Taxonomy" id="93061"/>
    <lineage>
        <taxon>Bacteria</taxon>
        <taxon>Bacillati</taxon>
        <taxon>Bacillota</taxon>
        <taxon>Bacilli</taxon>
        <taxon>Bacillales</taxon>
        <taxon>Staphylococcaceae</taxon>
        <taxon>Staphylococcus</taxon>
    </lineage>
</organism>
<dbReference type="EMBL" id="CP000253">
    <property type="protein sequence ID" value="ABD30216.1"/>
    <property type="status" value="ALT_INIT"/>
    <property type="molecule type" value="Genomic_DNA"/>
</dbReference>
<dbReference type="RefSeq" id="WP_000390529.1">
    <property type="nucleotide sequence ID" value="NZ_LS483365.1"/>
</dbReference>
<dbReference type="RefSeq" id="YP_499646.2">
    <property type="nucleotide sequence ID" value="NC_007795.1"/>
</dbReference>
<dbReference type="SMR" id="Q2FZD0"/>
<dbReference type="STRING" id="93061.SAOUHSC_01102"/>
<dbReference type="PaxDb" id="1280-SAXN108_1141"/>
<dbReference type="GeneID" id="3920744"/>
<dbReference type="KEGG" id="sao:SAOUHSC_01102"/>
<dbReference type="PATRIC" id="fig|93061.5.peg.1009"/>
<dbReference type="eggNOG" id="COG0322">
    <property type="taxonomic scope" value="Bacteria"/>
</dbReference>
<dbReference type="HOGENOM" id="CLU_014841_3_2_9"/>
<dbReference type="OrthoDB" id="9804933at2"/>
<dbReference type="PRO" id="PR:Q2FZD0"/>
<dbReference type="Proteomes" id="UP000008816">
    <property type="component" value="Chromosome"/>
</dbReference>
<dbReference type="GO" id="GO:0005737">
    <property type="term" value="C:cytoplasm"/>
    <property type="evidence" value="ECO:0007669"/>
    <property type="project" value="UniProtKB-SubCell"/>
</dbReference>
<dbReference type="GO" id="GO:0009380">
    <property type="term" value="C:excinuclease repair complex"/>
    <property type="evidence" value="ECO:0000318"/>
    <property type="project" value="GO_Central"/>
</dbReference>
<dbReference type="GO" id="GO:0003677">
    <property type="term" value="F:DNA binding"/>
    <property type="evidence" value="ECO:0007669"/>
    <property type="project" value="UniProtKB-UniRule"/>
</dbReference>
<dbReference type="GO" id="GO:0009381">
    <property type="term" value="F:excinuclease ABC activity"/>
    <property type="evidence" value="ECO:0007669"/>
    <property type="project" value="UniProtKB-UniRule"/>
</dbReference>
<dbReference type="GO" id="GO:0006974">
    <property type="term" value="P:DNA damage response"/>
    <property type="evidence" value="ECO:0000318"/>
    <property type="project" value="GO_Central"/>
</dbReference>
<dbReference type="GO" id="GO:0006289">
    <property type="term" value="P:nucleotide-excision repair"/>
    <property type="evidence" value="ECO:0007669"/>
    <property type="project" value="UniProtKB-UniRule"/>
</dbReference>
<dbReference type="GO" id="GO:0009432">
    <property type="term" value="P:SOS response"/>
    <property type="evidence" value="ECO:0007669"/>
    <property type="project" value="UniProtKB-UniRule"/>
</dbReference>
<dbReference type="CDD" id="cd10434">
    <property type="entry name" value="GIY-YIG_UvrC_Cho"/>
    <property type="match status" value="1"/>
</dbReference>
<dbReference type="FunFam" id="3.30.420.340:FF:000002">
    <property type="entry name" value="UvrABC system protein C"/>
    <property type="match status" value="1"/>
</dbReference>
<dbReference type="FunFam" id="3.40.1440.10:FF:000001">
    <property type="entry name" value="UvrABC system protein C"/>
    <property type="match status" value="1"/>
</dbReference>
<dbReference type="FunFam" id="4.10.860.10:FF:000007">
    <property type="entry name" value="UvrABC system protein C"/>
    <property type="match status" value="1"/>
</dbReference>
<dbReference type="Gene3D" id="1.10.150.20">
    <property type="entry name" value="5' to 3' exonuclease, C-terminal subdomain"/>
    <property type="match status" value="1"/>
</dbReference>
<dbReference type="Gene3D" id="3.40.1440.10">
    <property type="entry name" value="GIY-YIG endonuclease"/>
    <property type="match status" value="1"/>
</dbReference>
<dbReference type="Gene3D" id="4.10.860.10">
    <property type="entry name" value="UVR domain"/>
    <property type="match status" value="1"/>
</dbReference>
<dbReference type="Gene3D" id="3.30.420.340">
    <property type="entry name" value="UvrC, RNAse H endonuclease domain"/>
    <property type="match status" value="1"/>
</dbReference>
<dbReference type="HAMAP" id="MF_00203">
    <property type="entry name" value="UvrC"/>
    <property type="match status" value="1"/>
</dbReference>
<dbReference type="InterPro" id="IPR000305">
    <property type="entry name" value="GIY-YIG_endonuc"/>
</dbReference>
<dbReference type="InterPro" id="IPR035901">
    <property type="entry name" value="GIY-YIG_endonuc_sf"/>
</dbReference>
<dbReference type="InterPro" id="IPR047296">
    <property type="entry name" value="GIY-YIG_UvrC_Cho"/>
</dbReference>
<dbReference type="InterPro" id="IPR010994">
    <property type="entry name" value="RuvA_2-like"/>
</dbReference>
<dbReference type="InterPro" id="IPR001943">
    <property type="entry name" value="UVR_dom"/>
</dbReference>
<dbReference type="InterPro" id="IPR036876">
    <property type="entry name" value="UVR_dom_sf"/>
</dbReference>
<dbReference type="InterPro" id="IPR050066">
    <property type="entry name" value="UvrABC_protein_C"/>
</dbReference>
<dbReference type="InterPro" id="IPR004791">
    <property type="entry name" value="UvrC"/>
</dbReference>
<dbReference type="InterPro" id="IPR001162">
    <property type="entry name" value="UvrC_RNase_H_dom"/>
</dbReference>
<dbReference type="InterPro" id="IPR038476">
    <property type="entry name" value="UvrC_RNase_H_dom_sf"/>
</dbReference>
<dbReference type="NCBIfam" id="TIGR00194">
    <property type="entry name" value="uvrC"/>
    <property type="match status" value="1"/>
</dbReference>
<dbReference type="PANTHER" id="PTHR30562:SF1">
    <property type="entry name" value="UVRABC SYSTEM PROTEIN C"/>
    <property type="match status" value="1"/>
</dbReference>
<dbReference type="PANTHER" id="PTHR30562">
    <property type="entry name" value="UVRC/OXIDOREDUCTASE"/>
    <property type="match status" value="1"/>
</dbReference>
<dbReference type="Pfam" id="PF01541">
    <property type="entry name" value="GIY-YIG"/>
    <property type="match status" value="1"/>
</dbReference>
<dbReference type="Pfam" id="PF02151">
    <property type="entry name" value="UVR"/>
    <property type="match status" value="1"/>
</dbReference>
<dbReference type="Pfam" id="PF22920">
    <property type="entry name" value="UvrC_RNaseH"/>
    <property type="match status" value="1"/>
</dbReference>
<dbReference type="Pfam" id="PF08459">
    <property type="entry name" value="UvrC_RNaseH_dom"/>
    <property type="match status" value="1"/>
</dbReference>
<dbReference type="SMART" id="SM00465">
    <property type="entry name" value="GIYc"/>
    <property type="match status" value="1"/>
</dbReference>
<dbReference type="SUPFAM" id="SSF46600">
    <property type="entry name" value="C-terminal UvrC-binding domain of UvrB"/>
    <property type="match status" value="1"/>
</dbReference>
<dbReference type="SUPFAM" id="SSF82771">
    <property type="entry name" value="GIY-YIG endonuclease"/>
    <property type="match status" value="1"/>
</dbReference>
<dbReference type="SUPFAM" id="SSF47781">
    <property type="entry name" value="RuvA domain 2-like"/>
    <property type="match status" value="1"/>
</dbReference>
<dbReference type="PROSITE" id="PS50164">
    <property type="entry name" value="GIY_YIG"/>
    <property type="match status" value="1"/>
</dbReference>
<dbReference type="PROSITE" id="PS50151">
    <property type="entry name" value="UVR"/>
    <property type="match status" value="1"/>
</dbReference>
<dbReference type="PROSITE" id="PS50165">
    <property type="entry name" value="UVRC"/>
    <property type="match status" value="1"/>
</dbReference>
<reference key="1">
    <citation type="book" date="2006" name="Gram positive pathogens, 2nd edition">
        <title>The Staphylococcus aureus NCTC 8325 genome.</title>
        <editorList>
            <person name="Fischetti V."/>
            <person name="Novick R."/>
            <person name="Ferretti J."/>
            <person name="Portnoy D."/>
            <person name="Rood J."/>
        </editorList>
        <authorList>
            <person name="Gillaspy A.F."/>
            <person name="Worrell V."/>
            <person name="Orvis J."/>
            <person name="Roe B.A."/>
            <person name="Dyer D.W."/>
            <person name="Iandolo J.J."/>
        </authorList>
    </citation>
    <scope>NUCLEOTIDE SEQUENCE [LARGE SCALE GENOMIC DNA]</scope>
    <source>
        <strain>NCTC 8325 / PS 47</strain>
    </source>
</reference>
<gene>
    <name evidence="1" type="primary">uvrC</name>
    <name type="ordered locus">SAOUHSC_01102</name>
</gene>
<keyword id="KW-0963">Cytoplasm</keyword>
<keyword id="KW-0227">DNA damage</keyword>
<keyword id="KW-0228">DNA excision</keyword>
<keyword id="KW-0234">DNA repair</keyword>
<keyword id="KW-0267">Excision nuclease</keyword>
<keyword id="KW-1185">Reference proteome</keyword>
<keyword id="KW-0742">SOS response</keyword>
<feature type="chain" id="PRO_0000264955" description="UvrABC system protein C">
    <location>
        <begin position="1"/>
        <end position="593"/>
    </location>
</feature>
<feature type="domain" description="GIY-YIG" evidence="1">
    <location>
        <begin position="17"/>
        <end position="94"/>
    </location>
</feature>
<feature type="domain" description="UVR" evidence="1">
    <location>
        <begin position="199"/>
        <end position="234"/>
    </location>
</feature>
<protein>
    <recommendedName>
        <fullName evidence="1">UvrABC system protein C</fullName>
        <shortName evidence="1">Protein UvrC</shortName>
    </recommendedName>
    <alternativeName>
        <fullName evidence="1">Excinuclease ABC subunit C</fullName>
    </alternativeName>
</protein>
<accession>Q2FZD0</accession>